<comment type="function">
    <text evidence="1 3">Involved in the catabolism of short chain fatty acids (SCFA) via the tricarboxylic acid (TCA)(acetyl degradation route) and probably the 2-methylcitrate cycle I (propionate degradation route). Catalyzes the reversible isomerization of citrate to isocitrate via cis-aconitate. Could catalyze the hydration of 2-methyl-cis-aconitate to yield (2R,3S)-2-methylisocitrate. The apo form of AcnA functions as a RNA-binding regulatory protein.</text>
</comment>
<comment type="catalytic activity">
    <reaction evidence="3">
        <text>citrate = D-threo-isocitrate</text>
        <dbReference type="Rhea" id="RHEA:10336"/>
        <dbReference type="ChEBI" id="CHEBI:15562"/>
        <dbReference type="ChEBI" id="CHEBI:16947"/>
        <dbReference type="EC" id="4.2.1.3"/>
    </reaction>
</comment>
<comment type="catalytic activity">
    <reaction evidence="3">
        <text>(2S,3R)-3-hydroxybutane-1,2,3-tricarboxylate = 2-methyl-cis-aconitate + H2O</text>
        <dbReference type="Rhea" id="RHEA:17941"/>
        <dbReference type="ChEBI" id="CHEBI:15377"/>
        <dbReference type="ChEBI" id="CHEBI:57429"/>
        <dbReference type="ChEBI" id="CHEBI:57872"/>
        <dbReference type="EC" id="4.2.1.99"/>
    </reaction>
</comment>
<comment type="cofactor">
    <cofactor evidence="1">
        <name>[4Fe-4S] cluster</name>
        <dbReference type="ChEBI" id="CHEBI:49883"/>
    </cofactor>
    <text evidence="1">Binds 1 [4Fe-4S] cluster per subunit.</text>
</comment>
<comment type="pathway">
    <text evidence="3">Carbohydrate metabolism; tricarboxylic acid cycle; isocitrate from oxaloacetate: step 2/2.</text>
</comment>
<comment type="pathway">
    <text evidence="3">Organic acid metabolism; propanoate degradation.</text>
</comment>
<comment type="subunit">
    <text evidence="1">Monomer.</text>
</comment>
<comment type="similarity">
    <text evidence="4">Belongs to the aconitase/IPM isomerase family.</text>
</comment>
<reference key="1">
    <citation type="journal article" date="2001" name="Lancet">
        <title>Whole genome sequencing of meticillin-resistant Staphylococcus aureus.</title>
        <authorList>
            <person name="Kuroda M."/>
            <person name="Ohta T."/>
            <person name="Uchiyama I."/>
            <person name="Baba T."/>
            <person name="Yuzawa H."/>
            <person name="Kobayashi I."/>
            <person name="Cui L."/>
            <person name="Oguchi A."/>
            <person name="Aoki K."/>
            <person name="Nagai Y."/>
            <person name="Lian J.-Q."/>
            <person name="Ito T."/>
            <person name="Kanamori M."/>
            <person name="Matsumaru H."/>
            <person name="Maruyama A."/>
            <person name="Murakami H."/>
            <person name="Hosoyama A."/>
            <person name="Mizutani-Ui Y."/>
            <person name="Takahashi N.K."/>
            <person name="Sawano T."/>
            <person name="Inoue R."/>
            <person name="Kaito C."/>
            <person name="Sekimizu K."/>
            <person name="Hirakawa H."/>
            <person name="Kuhara S."/>
            <person name="Goto S."/>
            <person name="Yabuzaki J."/>
            <person name="Kanehisa M."/>
            <person name="Yamashita A."/>
            <person name="Oshima K."/>
            <person name="Furuya K."/>
            <person name="Yoshino C."/>
            <person name="Shiba T."/>
            <person name="Hattori M."/>
            <person name="Ogasawara N."/>
            <person name="Hayashi H."/>
            <person name="Hiramatsu K."/>
        </authorList>
    </citation>
    <scope>NUCLEOTIDE SEQUENCE [LARGE SCALE GENOMIC DNA]</scope>
    <source>
        <strain>N315</strain>
    </source>
</reference>
<reference key="2">
    <citation type="journal article" date="2005" name="J. Microbiol. Methods">
        <title>Correlation of proteomic and transcriptomic profiles of Staphylococcus aureus during the post-exponential phase of growth.</title>
        <authorList>
            <person name="Scherl A."/>
            <person name="Francois P."/>
            <person name="Bento M."/>
            <person name="Deshusses J.M."/>
            <person name="Charbonnier Y."/>
            <person name="Converset V."/>
            <person name="Huyghe A."/>
            <person name="Walter N."/>
            <person name="Hoogland C."/>
            <person name="Appel R.D."/>
            <person name="Sanchez J.-C."/>
            <person name="Zimmermann-Ivol C.G."/>
            <person name="Corthals G.L."/>
            <person name="Hochstrasser D.F."/>
            <person name="Schrenzel J."/>
        </authorList>
    </citation>
    <scope>IDENTIFICATION BY MASS SPECTROMETRY</scope>
    <source>
        <strain>N315</strain>
    </source>
</reference>
<reference key="3">
    <citation type="submission" date="2007-10" db="UniProtKB">
        <title>Shotgun proteomic analysis of total and membrane protein extracts of S. aureus strain N315.</title>
        <authorList>
            <person name="Vaezzadeh A.R."/>
            <person name="Deshusses J."/>
            <person name="Lescuyer P."/>
            <person name="Hochstrasser D.F."/>
        </authorList>
    </citation>
    <scope>IDENTIFICATION BY MASS SPECTROMETRY [LARGE SCALE ANALYSIS]</scope>
    <source>
        <strain>N315</strain>
    </source>
</reference>
<proteinExistence type="evidence at protein level"/>
<sequence length="901" mass="98970">MAANFKEQSKKHFDLNGQSYTYYDLKAVEEQGITKVSNLPYSIRVLLESLLRQEDDFVITDDHIKALSQFGKDGNEGEVPFKPSRVILQDFTGVPAVVDLASLRKAMDDVGGDITKINPEVPVDLVIDHSVQVDSYANPEALERNMKLEFERNYERYQFLNWATKAFDNYNAVPPATGIVHQVNLEYLASVVHVRDVDGEKTAFPDTLVGTDSHTTMINGIGVLGWGVGGIEAEAGMLGQPSYFPIPEVIGVRLVNSLPQGATATDLALRVTQELRKKGVVGKFVEFFGPGVQHLPLADRATIANMAPEYGATCGFFPVDDESLKYMKLTGRSDEHIALVKEYLKQNHMFFDVEKEDPNYTDVIELDLSTVEASLSGPKRPQDLIFLSDMKSSFENSVTAPAGNQGHGLDKSEFDKKAEINFKDGSKATMKTGDIAIAAITSCTNTSNPYVMLGAGLVAKKAVEKGLKVPEYVKTSLAPGSKVVTGYLRDAGLQPYLDDLGFNLVGYGCTTCIGNSGPLLPEIEKAIADEDLLVTSVLSGNRNFEGRIHPLVKANYLASPQLVVAYALAGTVDIDLQNEPIGKGNDGEDVYLKDIWPSIKEVSDTVDSVVTPELFIEEYNNVYNNNELWNEIDVTDQPLYDFDPNSTYIQNPSFFQGLSKEPGTIVPLNGLRVMGKFGDSVTTDHISPAGAIGKDTPAGKYLQDHQVPIREFNSYGSRRGNHEVMVRGTFANIRIKNQLAPGTEGGFTTYWPTNEVMPIFDAAMKYKEDGTGLVVLAGNDYGMGSSRDWAAKGTNLLGVKTVIAQSYERIHRSNLVMMGVLPLEFKKGESADSLGLDGTEEISVNIDENVQPHDYVKVTAKKQDGDLVEFDAMVRFDSLVEMDYYRHGGILQMVLRNKLAQ</sequence>
<organism>
    <name type="scientific">Staphylococcus aureus (strain N315)</name>
    <dbReference type="NCBI Taxonomy" id="158879"/>
    <lineage>
        <taxon>Bacteria</taxon>
        <taxon>Bacillati</taxon>
        <taxon>Bacillota</taxon>
        <taxon>Bacilli</taxon>
        <taxon>Bacillales</taxon>
        <taxon>Staphylococcaceae</taxon>
        <taxon>Staphylococcus</taxon>
    </lineage>
</organism>
<protein>
    <recommendedName>
        <fullName evidence="3">Aconitate hydratase A</fullName>
        <shortName evidence="3">ACN</shortName>
        <shortName evidence="3">Aconitase</shortName>
        <ecNumber evidence="3">4.2.1.3</ecNumber>
    </recommendedName>
    <alternativeName>
        <fullName evidence="3">(2R,3S)-2-methylisocitrate dehydratase</fullName>
    </alternativeName>
    <alternativeName>
        <fullName evidence="3">(2S,3R)-3-hydroxybutane-1,2,3-tricarboxylate dehydratase</fullName>
    </alternativeName>
    <alternativeName>
        <fullName evidence="1">Iron-responsive protein-like</fullName>
        <shortName evidence="1">IRP-like</shortName>
    </alternativeName>
    <alternativeName>
        <fullName evidence="3">Probable 2-methyl-cis-aconitate hydratase</fullName>
        <ecNumber evidence="3">4.2.1.99</ecNumber>
    </alternativeName>
    <alternativeName>
        <fullName evidence="1">RNA-binding protein</fullName>
    </alternativeName>
</protein>
<accession>P99148</accession>
<accession>Q99UC8</accession>
<feature type="chain" id="PRO_0000076668" description="Aconitate hydratase A">
    <location>
        <begin position="1"/>
        <end position="901"/>
    </location>
</feature>
<feature type="binding site" evidence="2">
    <location>
        <position position="443"/>
    </location>
    <ligand>
        <name>[4Fe-4S] cluster</name>
        <dbReference type="ChEBI" id="CHEBI:49883"/>
    </ligand>
</feature>
<feature type="binding site" evidence="2">
    <location>
        <position position="509"/>
    </location>
    <ligand>
        <name>[4Fe-4S] cluster</name>
        <dbReference type="ChEBI" id="CHEBI:49883"/>
    </ligand>
</feature>
<feature type="binding site" evidence="2">
    <location>
        <position position="512"/>
    </location>
    <ligand>
        <name>[4Fe-4S] cluster</name>
        <dbReference type="ChEBI" id="CHEBI:49883"/>
    </ligand>
</feature>
<name>ACNA_STAAN</name>
<keyword id="KW-0408">Iron</keyword>
<keyword id="KW-0411">Iron-sulfur</keyword>
<keyword id="KW-0456">Lyase</keyword>
<keyword id="KW-0479">Metal-binding</keyword>
<keyword id="KW-0694">RNA-binding</keyword>
<keyword id="KW-0816">Tricarboxylic acid cycle</keyword>
<evidence type="ECO:0000250" key="1">
    <source>
        <dbReference type="UniProtKB" id="P09339"/>
    </source>
</evidence>
<evidence type="ECO:0000250" key="2">
    <source>
        <dbReference type="UniProtKB" id="P36683"/>
    </source>
</evidence>
<evidence type="ECO:0000250" key="3">
    <source>
        <dbReference type="UniProtKB" id="Q8ZP52"/>
    </source>
</evidence>
<evidence type="ECO:0000305" key="4"/>
<dbReference type="EC" id="4.2.1.3" evidence="3"/>
<dbReference type="EC" id="4.2.1.99" evidence="3"/>
<dbReference type="EMBL" id="BA000018">
    <property type="protein sequence ID" value="BAB42442.1"/>
    <property type="molecule type" value="Genomic_DNA"/>
</dbReference>
<dbReference type="PIR" id="F89910">
    <property type="entry name" value="F89910"/>
</dbReference>
<dbReference type="RefSeq" id="WP_000729744.1">
    <property type="nucleotide sequence ID" value="NC_002745.2"/>
</dbReference>
<dbReference type="SMR" id="P99148"/>
<dbReference type="EnsemblBacteria" id="BAB42442">
    <property type="protein sequence ID" value="BAB42442"/>
    <property type="gene ID" value="BAB42442"/>
</dbReference>
<dbReference type="KEGG" id="sau:SA1184"/>
<dbReference type="HOGENOM" id="CLU_013476_2_1_9"/>
<dbReference type="UniPathway" id="UPA00223">
    <property type="reaction ID" value="UER00718"/>
</dbReference>
<dbReference type="UniPathway" id="UPA00946"/>
<dbReference type="GO" id="GO:0047456">
    <property type="term" value="F:2-methylisocitrate dehydratase activity"/>
    <property type="evidence" value="ECO:0000250"/>
    <property type="project" value="UniProtKB"/>
</dbReference>
<dbReference type="GO" id="GO:0051539">
    <property type="term" value="F:4 iron, 4 sulfur cluster binding"/>
    <property type="evidence" value="ECO:0000250"/>
    <property type="project" value="UniProtKB"/>
</dbReference>
<dbReference type="GO" id="GO:0003994">
    <property type="term" value="F:aconitate hydratase activity"/>
    <property type="evidence" value="ECO:0000250"/>
    <property type="project" value="UniProtKB"/>
</dbReference>
<dbReference type="GO" id="GO:0046872">
    <property type="term" value="F:metal ion binding"/>
    <property type="evidence" value="ECO:0007669"/>
    <property type="project" value="UniProtKB-KW"/>
</dbReference>
<dbReference type="GO" id="GO:0003730">
    <property type="term" value="F:mRNA 3'-UTR binding"/>
    <property type="evidence" value="ECO:0000250"/>
    <property type="project" value="UniProtKB"/>
</dbReference>
<dbReference type="GO" id="GO:0003729">
    <property type="term" value="F:mRNA binding"/>
    <property type="evidence" value="ECO:0000250"/>
    <property type="project" value="UniProtKB"/>
</dbReference>
<dbReference type="GO" id="GO:0019679">
    <property type="term" value="P:propionate metabolic process, methylcitrate cycle"/>
    <property type="evidence" value="ECO:0000250"/>
    <property type="project" value="UniProtKB"/>
</dbReference>
<dbReference type="GO" id="GO:0006099">
    <property type="term" value="P:tricarboxylic acid cycle"/>
    <property type="evidence" value="ECO:0000250"/>
    <property type="project" value="UniProtKB"/>
</dbReference>
<dbReference type="CDD" id="cd01586">
    <property type="entry name" value="AcnA_IRP"/>
    <property type="match status" value="1"/>
</dbReference>
<dbReference type="CDD" id="cd01580">
    <property type="entry name" value="AcnA_IRP_Swivel"/>
    <property type="match status" value="1"/>
</dbReference>
<dbReference type="FunFam" id="3.20.19.10:FF:000001">
    <property type="entry name" value="Aconitate hydratase"/>
    <property type="match status" value="1"/>
</dbReference>
<dbReference type="FunFam" id="3.30.499.10:FF:000002">
    <property type="entry name" value="Aconitate hydratase"/>
    <property type="match status" value="1"/>
</dbReference>
<dbReference type="FunFam" id="3.30.499.10:FF:000005">
    <property type="entry name" value="cytoplasmic aconitate hydratase"/>
    <property type="match status" value="1"/>
</dbReference>
<dbReference type="Gene3D" id="6.10.190.10">
    <property type="match status" value="1"/>
</dbReference>
<dbReference type="Gene3D" id="3.30.499.10">
    <property type="entry name" value="Aconitase, domain 3"/>
    <property type="match status" value="2"/>
</dbReference>
<dbReference type="Gene3D" id="3.20.19.10">
    <property type="entry name" value="Aconitase, domain 4"/>
    <property type="match status" value="1"/>
</dbReference>
<dbReference type="InterPro" id="IPR044137">
    <property type="entry name" value="AcnA_IRP_Swivel"/>
</dbReference>
<dbReference type="InterPro" id="IPR015931">
    <property type="entry name" value="Acnase/IPM_dHydase_lsu_aba_1/3"/>
</dbReference>
<dbReference type="InterPro" id="IPR001030">
    <property type="entry name" value="Acoase/IPM_deHydtase_lsu_aba"/>
</dbReference>
<dbReference type="InterPro" id="IPR015928">
    <property type="entry name" value="Aconitase/3IPM_dehydase_swvl"/>
</dbReference>
<dbReference type="InterPro" id="IPR006249">
    <property type="entry name" value="Aconitase/IRP2"/>
</dbReference>
<dbReference type="InterPro" id="IPR018136">
    <property type="entry name" value="Aconitase_4Fe-4S_BS"/>
</dbReference>
<dbReference type="InterPro" id="IPR036008">
    <property type="entry name" value="Aconitase_4Fe-4S_dom"/>
</dbReference>
<dbReference type="InterPro" id="IPR000573">
    <property type="entry name" value="AconitaseA/IPMdHydase_ssu_swvl"/>
</dbReference>
<dbReference type="NCBIfam" id="TIGR01341">
    <property type="entry name" value="aconitase_1"/>
    <property type="match status" value="1"/>
</dbReference>
<dbReference type="NCBIfam" id="NF006757">
    <property type="entry name" value="PRK09277.1"/>
    <property type="match status" value="1"/>
</dbReference>
<dbReference type="NCBIfam" id="NF009520">
    <property type="entry name" value="PRK12881.1"/>
    <property type="match status" value="1"/>
</dbReference>
<dbReference type="PANTHER" id="PTHR11670">
    <property type="entry name" value="ACONITASE/IRON-RESPONSIVE ELEMENT FAMILY MEMBER"/>
    <property type="match status" value="1"/>
</dbReference>
<dbReference type="Pfam" id="PF00330">
    <property type="entry name" value="Aconitase"/>
    <property type="match status" value="1"/>
</dbReference>
<dbReference type="Pfam" id="PF00694">
    <property type="entry name" value="Aconitase_C"/>
    <property type="match status" value="1"/>
</dbReference>
<dbReference type="PRINTS" id="PR00415">
    <property type="entry name" value="ACONITASE"/>
</dbReference>
<dbReference type="SUPFAM" id="SSF53732">
    <property type="entry name" value="Aconitase iron-sulfur domain"/>
    <property type="match status" value="1"/>
</dbReference>
<dbReference type="SUPFAM" id="SSF52016">
    <property type="entry name" value="LeuD/IlvD-like"/>
    <property type="match status" value="1"/>
</dbReference>
<dbReference type="PROSITE" id="PS00450">
    <property type="entry name" value="ACONITASE_1"/>
    <property type="match status" value="1"/>
</dbReference>
<dbReference type="PROSITE" id="PS01244">
    <property type="entry name" value="ACONITASE_2"/>
    <property type="match status" value="1"/>
</dbReference>
<gene>
    <name type="primary">acnA</name>
    <name type="synonym">citB</name>
    <name type="ordered locus">SA1184</name>
</gene>